<comment type="function">
    <text evidence="1">Converts seryl-tRNA(Sec) to selenocysteinyl-tRNA(Sec) required for selenoprotein biosynthesis.</text>
</comment>
<comment type="catalytic activity">
    <reaction evidence="1">
        <text>L-seryl-tRNA(Sec) + selenophosphate + H(+) = L-selenocysteinyl-tRNA(Sec) + phosphate</text>
        <dbReference type="Rhea" id="RHEA:22728"/>
        <dbReference type="Rhea" id="RHEA-COMP:9742"/>
        <dbReference type="Rhea" id="RHEA-COMP:9743"/>
        <dbReference type="ChEBI" id="CHEBI:15378"/>
        <dbReference type="ChEBI" id="CHEBI:16144"/>
        <dbReference type="ChEBI" id="CHEBI:43474"/>
        <dbReference type="ChEBI" id="CHEBI:78533"/>
        <dbReference type="ChEBI" id="CHEBI:78573"/>
        <dbReference type="EC" id="2.9.1.1"/>
    </reaction>
</comment>
<comment type="cofactor">
    <cofactor evidence="1">
        <name>pyridoxal 5'-phosphate</name>
        <dbReference type="ChEBI" id="CHEBI:597326"/>
    </cofactor>
</comment>
<comment type="pathway">
    <text evidence="1">Aminoacyl-tRNA biosynthesis; selenocysteinyl-tRNA(Sec) biosynthesis; selenocysteinyl-tRNA(Sec) from L-seryl-tRNA(Sec) (bacterial route): step 1/1.</text>
</comment>
<comment type="subunit">
    <text evidence="1">Homodecamer; pentamer of dimers. Binds only one seryl-tRNA(Sec) per dimer.</text>
</comment>
<comment type="subcellular location">
    <subcellularLocation>
        <location evidence="1">Cytoplasm</location>
    </subcellularLocation>
</comment>
<comment type="similarity">
    <text evidence="1">Belongs to the SelA family.</text>
</comment>
<gene>
    <name evidence="1" type="primary">selA</name>
    <name type="ordered locus">ECS88_4008</name>
</gene>
<organism>
    <name type="scientific">Escherichia coli O45:K1 (strain S88 / ExPEC)</name>
    <dbReference type="NCBI Taxonomy" id="585035"/>
    <lineage>
        <taxon>Bacteria</taxon>
        <taxon>Pseudomonadati</taxon>
        <taxon>Pseudomonadota</taxon>
        <taxon>Gammaproteobacteria</taxon>
        <taxon>Enterobacterales</taxon>
        <taxon>Enterobacteriaceae</taxon>
        <taxon>Escherichia</taxon>
    </lineage>
</organism>
<reference key="1">
    <citation type="journal article" date="2009" name="PLoS Genet.">
        <title>Organised genome dynamics in the Escherichia coli species results in highly diverse adaptive paths.</title>
        <authorList>
            <person name="Touchon M."/>
            <person name="Hoede C."/>
            <person name="Tenaillon O."/>
            <person name="Barbe V."/>
            <person name="Baeriswyl S."/>
            <person name="Bidet P."/>
            <person name="Bingen E."/>
            <person name="Bonacorsi S."/>
            <person name="Bouchier C."/>
            <person name="Bouvet O."/>
            <person name="Calteau A."/>
            <person name="Chiapello H."/>
            <person name="Clermont O."/>
            <person name="Cruveiller S."/>
            <person name="Danchin A."/>
            <person name="Diard M."/>
            <person name="Dossat C."/>
            <person name="Karoui M.E."/>
            <person name="Frapy E."/>
            <person name="Garry L."/>
            <person name="Ghigo J.M."/>
            <person name="Gilles A.M."/>
            <person name="Johnson J."/>
            <person name="Le Bouguenec C."/>
            <person name="Lescat M."/>
            <person name="Mangenot S."/>
            <person name="Martinez-Jehanne V."/>
            <person name="Matic I."/>
            <person name="Nassif X."/>
            <person name="Oztas S."/>
            <person name="Petit M.A."/>
            <person name="Pichon C."/>
            <person name="Rouy Z."/>
            <person name="Ruf C.S."/>
            <person name="Schneider D."/>
            <person name="Tourret J."/>
            <person name="Vacherie B."/>
            <person name="Vallenet D."/>
            <person name="Medigue C."/>
            <person name="Rocha E.P.C."/>
            <person name="Denamur E."/>
        </authorList>
    </citation>
    <scope>NUCLEOTIDE SEQUENCE [LARGE SCALE GENOMIC DNA]</scope>
    <source>
        <strain>S88 / ExPEC</strain>
    </source>
</reference>
<feature type="chain" id="PRO_1000124137" description="L-seryl-tRNA(Sec) selenium transferase">
    <location>
        <begin position="1"/>
        <end position="463"/>
    </location>
</feature>
<feature type="modified residue" description="N6-(pyridoxal phosphate)lysine" evidence="1">
    <location>
        <position position="295"/>
    </location>
</feature>
<sequence>MTTETRSLYSQLPAIDRLLRDSSFLSLRDTYGHTRVVELLRQMLDEAREVIRDSQTLPAWCENWAQEVDARLTKEAQSALRPVINLTGTVLHTNLGRALQAEAAVEAVTKAMRSPVTLEYDLDDAGRGHRDRALAQLLCRITGAEDACIVNNNAAAVLLMLAATASGKEVVVSRGELVEIGGAFRIPDVMRQAGCTLHEVGTTNRTHANDYRQAVNENTALLMKVHTSNYSIQGFTKAIDEAELVALGKELDVPVVTDLGSGSLVDLSQYGLPKEPMPQELIAAGVSLVSFSGDKLLGGPQAGIIVGKKEMIARLQSHPLKRALRADKMTLAALEATLRLYLHSEALSEKLPTLRLLTRSAEVIQIQAQRLQAPLAAHYGAEFAVQVMPCLSQIGSGSLPVDRLPSAALTFTPHDGRGSHLESLAARWRELPVPVIGRIYDGRLWLDLRCLEDEQRFLEMLLK</sequence>
<keyword id="KW-0963">Cytoplasm</keyword>
<keyword id="KW-0648">Protein biosynthesis</keyword>
<keyword id="KW-0663">Pyridoxal phosphate</keyword>
<keyword id="KW-1185">Reference proteome</keyword>
<keyword id="KW-0711">Selenium</keyword>
<keyword id="KW-0808">Transferase</keyword>
<evidence type="ECO:0000255" key="1">
    <source>
        <dbReference type="HAMAP-Rule" id="MF_00423"/>
    </source>
</evidence>
<accession>B7MFF5</accession>
<protein>
    <recommendedName>
        <fullName evidence="1">L-seryl-tRNA(Sec) selenium transferase</fullName>
        <ecNumber evidence="1">2.9.1.1</ecNumber>
    </recommendedName>
    <alternativeName>
        <fullName evidence="1">Selenocysteine synthase</fullName>
        <shortName evidence="1">Sec synthase</shortName>
    </alternativeName>
    <alternativeName>
        <fullName evidence="1">Selenocysteinyl-tRNA(Sec) synthase</fullName>
    </alternativeName>
</protein>
<proteinExistence type="inferred from homology"/>
<name>SELA_ECO45</name>
<dbReference type="EC" id="2.9.1.1" evidence="1"/>
<dbReference type="EMBL" id="CU928161">
    <property type="protein sequence ID" value="CAR05217.1"/>
    <property type="molecule type" value="Genomic_DNA"/>
</dbReference>
<dbReference type="RefSeq" id="WP_000206263.1">
    <property type="nucleotide sequence ID" value="NC_011742.1"/>
</dbReference>
<dbReference type="SMR" id="B7MFF5"/>
<dbReference type="KEGG" id="ecz:ECS88_4008"/>
<dbReference type="HOGENOM" id="CLU_038142_1_0_6"/>
<dbReference type="UniPathway" id="UPA00906">
    <property type="reaction ID" value="UER00896"/>
</dbReference>
<dbReference type="Proteomes" id="UP000000747">
    <property type="component" value="Chromosome"/>
</dbReference>
<dbReference type="GO" id="GO:0005737">
    <property type="term" value="C:cytoplasm"/>
    <property type="evidence" value="ECO:0007669"/>
    <property type="project" value="UniProtKB-SubCell"/>
</dbReference>
<dbReference type="GO" id="GO:0004125">
    <property type="term" value="F:L-seryl-tRNA(Sec) selenium transferase activity"/>
    <property type="evidence" value="ECO:0007669"/>
    <property type="project" value="UniProtKB-UniRule"/>
</dbReference>
<dbReference type="GO" id="GO:0001717">
    <property type="term" value="P:conversion of seryl-tRNAsec to selenocys-tRNAsec"/>
    <property type="evidence" value="ECO:0007669"/>
    <property type="project" value="UniProtKB-UniRule"/>
</dbReference>
<dbReference type="GO" id="GO:0001514">
    <property type="term" value="P:selenocysteine incorporation"/>
    <property type="evidence" value="ECO:0007669"/>
    <property type="project" value="UniProtKB-UniRule"/>
</dbReference>
<dbReference type="FunFam" id="3.40.640.10:FF:000028">
    <property type="entry name" value="L-seryl-tRNA(Sec) selenium transferase"/>
    <property type="match status" value="1"/>
</dbReference>
<dbReference type="FunFam" id="3.90.1150.180:FF:000001">
    <property type="entry name" value="L-seryl-tRNA(Sec) selenium transferase"/>
    <property type="match status" value="1"/>
</dbReference>
<dbReference type="Gene3D" id="3.90.1150.180">
    <property type="match status" value="1"/>
</dbReference>
<dbReference type="Gene3D" id="3.40.640.10">
    <property type="entry name" value="Type I PLP-dependent aspartate aminotransferase-like (Major domain)"/>
    <property type="match status" value="1"/>
</dbReference>
<dbReference type="HAMAP" id="MF_00423">
    <property type="entry name" value="SelA"/>
    <property type="match status" value="1"/>
</dbReference>
<dbReference type="InterPro" id="IPR015424">
    <property type="entry name" value="PyrdxlP-dep_Trfase"/>
</dbReference>
<dbReference type="InterPro" id="IPR015421">
    <property type="entry name" value="PyrdxlP-dep_Trfase_major"/>
</dbReference>
<dbReference type="InterPro" id="IPR018319">
    <property type="entry name" value="SelA-like"/>
</dbReference>
<dbReference type="InterPro" id="IPR004534">
    <property type="entry name" value="SelA_trans"/>
</dbReference>
<dbReference type="InterPro" id="IPR025862">
    <property type="entry name" value="SelA_trans_N_dom"/>
</dbReference>
<dbReference type="NCBIfam" id="TIGR00474">
    <property type="entry name" value="selA"/>
    <property type="match status" value="1"/>
</dbReference>
<dbReference type="PANTHER" id="PTHR32328">
    <property type="entry name" value="L-SERYL-TRNA(SEC) SELENIUM TRANSFERASE"/>
    <property type="match status" value="1"/>
</dbReference>
<dbReference type="PANTHER" id="PTHR32328:SF0">
    <property type="entry name" value="L-SERYL-TRNA(SEC) SELENIUM TRANSFERASE"/>
    <property type="match status" value="1"/>
</dbReference>
<dbReference type="Pfam" id="PF12390">
    <property type="entry name" value="Se-cys_synth_N"/>
    <property type="match status" value="1"/>
</dbReference>
<dbReference type="Pfam" id="PF03841">
    <property type="entry name" value="SelA"/>
    <property type="match status" value="1"/>
</dbReference>
<dbReference type="SUPFAM" id="SSF53383">
    <property type="entry name" value="PLP-dependent transferases"/>
    <property type="match status" value="1"/>
</dbReference>